<evidence type="ECO:0000255" key="1">
    <source>
        <dbReference type="HAMAP-Rule" id="MF_03122"/>
    </source>
</evidence>
<evidence type="ECO:0000305" key="2"/>
<dbReference type="EMBL" id="AE017342">
    <property type="protein sequence ID" value="AAW41673.1"/>
    <property type="molecule type" value="Genomic_DNA"/>
</dbReference>
<dbReference type="RefSeq" id="XP_568980.1">
    <property type="nucleotide sequence ID" value="XM_568980.1"/>
</dbReference>
<dbReference type="SMR" id="P0CQ58"/>
<dbReference type="FunCoup" id="P0CQ58">
    <property type="interactions" value="491"/>
</dbReference>
<dbReference type="STRING" id="214684.P0CQ58"/>
<dbReference type="PaxDb" id="214684-P0CQ58"/>
<dbReference type="EnsemblFungi" id="AAW41673">
    <property type="protein sequence ID" value="AAW41673"/>
    <property type="gene ID" value="CNB04880"/>
</dbReference>
<dbReference type="GeneID" id="3255847"/>
<dbReference type="KEGG" id="cne:CNB04880"/>
<dbReference type="VEuPathDB" id="FungiDB:CNB04880"/>
<dbReference type="eggNOG" id="KOG1628">
    <property type="taxonomic scope" value="Eukaryota"/>
</dbReference>
<dbReference type="HOGENOM" id="CLU_062507_0_0_1"/>
<dbReference type="InParanoid" id="P0CQ58"/>
<dbReference type="OMA" id="TRFKGHE"/>
<dbReference type="OrthoDB" id="9834376at2759"/>
<dbReference type="Proteomes" id="UP000002149">
    <property type="component" value="Chromosome 2"/>
</dbReference>
<dbReference type="GO" id="GO:0005829">
    <property type="term" value="C:cytosol"/>
    <property type="evidence" value="ECO:0000318"/>
    <property type="project" value="GO_Central"/>
</dbReference>
<dbReference type="GO" id="GO:0022627">
    <property type="term" value="C:cytosolic small ribosomal subunit"/>
    <property type="evidence" value="ECO:0007669"/>
    <property type="project" value="UniProtKB-UniRule"/>
</dbReference>
<dbReference type="GO" id="GO:0003735">
    <property type="term" value="F:structural constituent of ribosome"/>
    <property type="evidence" value="ECO:0007669"/>
    <property type="project" value="UniProtKB-UniRule"/>
</dbReference>
<dbReference type="GO" id="GO:0006412">
    <property type="term" value="P:translation"/>
    <property type="evidence" value="ECO:0007669"/>
    <property type="project" value="UniProtKB-UniRule"/>
</dbReference>
<dbReference type="HAMAP" id="MF_03122">
    <property type="entry name" value="Ribosomal_eS1_euk"/>
    <property type="match status" value="1"/>
</dbReference>
<dbReference type="InterPro" id="IPR001593">
    <property type="entry name" value="Ribosomal_eS1"/>
</dbReference>
<dbReference type="InterPro" id="IPR018281">
    <property type="entry name" value="Ribosomal_eS1_CS"/>
</dbReference>
<dbReference type="InterPro" id="IPR027500">
    <property type="entry name" value="Ribosomal_eS1_euk"/>
</dbReference>
<dbReference type="PANTHER" id="PTHR11830">
    <property type="entry name" value="40S RIBOSOMAL PROTEIN S3A"/>
    <property type="match status" value="1"/>
</dbReference>
<dbReference type="Pfam" id="PF01015">
    <property type="entry name" value="Ribosomal_S3Ae"/>
    <property type="match status" value="1"/>
</dbReference>
<dbReference type="SMART" id="SM01397">
    <property type="entry name" value="Ribosomal_S3Ae"/>
    <property type="match status" value="1"/>
</dbReference>
<dbReference type="PROSITE" id="PS01191">
    <property type="entry name" value="RIBOSOMAL_S3AE"/>
    <property type="match status" value="1"/>
</dbReference>
<reference key="1">
    <citation type="journal article" date="2005" name="Science">
        <title>The genome of the basidiomycetous yeast and human pathogen Cryptococcus neoformans.</title>
        <authorList>
            <person name="Loftus B.J."/>
            <person name="Fung E."/>
            <person name="Roncaglia P."/>
            <person name="Rowley D."/>
            <person name="Amedeo P."/>
            <person name="Bruno D."/>
            <person name="Vamathevan J."/>
            <person name="Miranda M."/>
            <person name="Anderson I.J."/>
            <person name="Fraser J.A."/>
            <person name="Allen J.E."/>
            <person name="Bosdet I.E."/>
            <person name="Brent M.R."/>
            <person name="Chiu R."/>
            <person name="Doering T.L."/>
            <person name="Donlin M.J."/>
            <person name="D'Souza C.A."/>
            <person name="Fox D.S."/>
            <person name="Grinberg V."/>
            <person name="Fu J."/>
            <person name="Fukushima M."/>
            <person name="Haas B.J."/>
            <person name="Huang J.C."/>
            <person name="Janbon G."/>
            <person name="Jones S.J.M."/>
            <person name="Koo H.L."/>
            <person name="Krzywinski M.I."/>
            <person name="Kwon-Chung K.J."/>
            <person name="Lengeler K.B."/>
            <person name="Maiti R."/>
            <person name="Marra M.A."/>
            <person name="Marra R.E."/>
            <person name="Mathewson C.A."/>
            <person name="Mitchell T.G."/>
            <person name="Pertea M."/>
            <person name="Riggs F.R."/>
            <person name="Salzberg S.L."/>
            <person name="Schein J.E."/>
            <person name="Shvartsbeyn A."/>
            <person name="Shin H."/>
            <person name="Shumway M."/>
            <person name="Specht C.A."/>
            <person name="Suh B.B."/>
            <person name="Tenney A."/>
            <person name="Utterback T.R."/>
            <person name="Wickes B.L."/>
            <person name="Wortman J.R."/>
            <person name="Wye N.H."/>
            <person name="Kronstad J.W."/>
            <person name="Lodge J.K."/>
            <person name="Heitman J."/>
            <person name="Davis R.W."/>
            <person name="Fraser C.M."/>
            <person name="Hyman R.W."/>
        </authorList>
    </citation>
    <scope>NUCLEOTIDE SEQUENCE [LARGE SCALE GENOMIC DNA]</scope>
    <source>
        <strain>JEC21 / ATCC MYA-565</strain>
    </source>
</reference>
<organism>
    <name type="scientific">Cryptococcus neoformans var. neoformans serotype D (strain JEC21 / ATCC MYA-565)</name>
    <name type="common">Filobasidiella neoformans</name>
    <dbReference type="NCBI Taxonomy" id="214684"/>
    <lineage>
        <taxon>Eukaryota</taxon>
        <taxon>Fungi</taxon>
        <taxon>Dikarya</taxon>
        <taxon>Basidiomycota</taxon>
        <taxon>Agaricomycotina</taxon>
        <taxon>Tremellomycetes</taxon>
        <taxon>Tremellales</taxon>
        <taxon>Cryptococcaceae</taxon>
        <taxon>Cryptococcus</taxon>
        <taxon>Cryptococcus neoformans species complex</taxon>
    </lineage>
</organism>
<proteinExistence type="inferred from homology"/>
<protein>
    <recommendedName>
        <fullName evidence="1">Small ribosomal subunit protein eS1</fullName>
    </recommendedName>
    <alternativeName>
        <fullName evidence="2">40S ribosomal protein S1</fullName>
    </alternativeName>
</protein>
<keyword id="KW-0007">Acetylation</keyword>
<keyword id="KW-0963">Cytoplasm</keyword>
<keyword id="KW-1185">Reference proteome</keyword>
<keyword id="KW-0687">Ribonucleoprotein</keyword>
<keyword id="KW-0689">Ribosomal protein</keyword>
<comment type="subunit">
    <text evidence="1">Component of the small ribosomal subunit. Mature ribosomes consist of a small (40S) and a large (60S) subunit. The 40S subunit contains about 33 different proteins and 1 molecule of RNA (18S). The 60S subunit contains about 49 different proteins and 3 molecules of RNA (25S, 5.8S and 5S).</text>
</comment>
<comment type="subcellular location">
    <subcellularLocation>
        <location evidence="1">Cytoplasm</location>
    </subcellularLocation>
</comment>
<comment type="similarity">
    <text evidence="1">Belongs to the eukaryotic ribosomal protein eS1 family.</text>
</comment>
<accession>P0CQ58</accession>
<accession>Q55YD0</accession>
<accession>Q5KLL1</accession>
<sequence>MAVGKNKRLSKGKKGIKKKVVDPFTRKEWYDIKAPSFFENRNAGKTLVNRTQGLKNANDSLKGRVLELSLADLNNDQEQSFRKIKLRVEDVAGKSCLTSFYGMDFTTDKLRSIVRKWQSLVEAHVDVKTTDGYVLRLFAIGFTKRQSNQVKKTTYAQSSQLKEIRAKMVEIMRREAEGSDLKELVQKFVPESIGREIEKAAKGIYPLHNVYVRKAKIVKTPKIDMSKLLESHGEAMDANTGSKVVKSGEFVEPEILESV</sequence>
<feature type="initiator methionine" description="Removed" evidence="1">
    <location>
        <position position="1"/>
    </location>
</feature>
<feature type="chain" id="PRO_0000389373" description="Small ribosomal subunit protein eS1">
    <location>
        <begin position="2"/>
        <end position="259"/>
    </location>
</feature>
<feature type="modified residue" description="N-acetylalanine; partial" evidence="1">
    <location>
        <position position="2"/>
    </location>
</feature>
<name>RS3A_CRYNJ</name>
<gene>
    <name evidence="1" type="primary">RPS1</name>
    <name type="ordered locus">CNB04880</name>
</gene>